<evidence type="ECO:0000250" key="1"/>
<evidence type="ECO:0000250" key="2">
    <source>
        <dbReference type="UniProtKB" id="O95832"/>
    </source>
</evidence>
<evidence type="ECO:0000255" key="3"/>
<evidence type="ECO:0000256" key="4">
    <source>
        <dbReference type="SAM" id="MobiDB-lite"/>
    </source>
</evidence>
<evidence type="ECO:0000269" key="5">
    <source>
    </source>
</evidence>
<evidence type="ECO:0000269" key="6">
    <source>
    </source>
</evidence>
<evidence type="ECO:0000269" key="7">
    <source>
    </source>
</evidence>
<evidence type="ECO:0000269" key="8">
    <source>
    </source>
</evidence>
<evidence type="ECO:0000269" key="9">
    <source>
    </source>
</evidence>
<evidence type="ECO:0000269" key="10">
    <source>
    </source>
</evidence>
<evidence type="ECO:0000269" key="11">
    <source>
    </source>
</evidence>
<evidence type="ECO:0000269" key="12">
    <source>
    </source>
</evidence>
<evidence type="ECO:0000269" key="13">
    <source>
    </source>
</evidence>
<evidence type="ECO:0000305" key="14"/>
<organism>
    <name type="scientific">Mus musculus</name>
    <name type="common">Mouse</name>
    <dbReference type="NCBI Taxonomy" id="10090"/>
    <lineage>
        <taxon>Eukaryota</taxon>
        <taxon>Metazoa</taxon>
        <taxon>Chordata</taxon>
        <taxon>Craniata</taxon>
        <taxon>Vertebrata</taxon>
        <taxon>Euteleostomi</taxon>
        <taxon>Mammalia</taxon>
        <taxon>Eutheria</taxon>
        <taxon>Euarchontoglires</taxon>
        <taxon>Glires</taxon>
        <taxon>Rodentia</taxon>
        <taxon>Myomorpha</taxon>
        <taxon>Muroidea</taxon>
        <taxon>Muridae</taxon>
        <taxon>Murinae</taxon>
        <taxon>Mus</taxon>
        <taxon>Mus</taxon>
    </lineage>
</organism>
<proteinExistence type="evidence at protein level"/>
<accession>O88551</accession>
<dbReference type="EMBL" id="AF072127">
    <property type="protein sequence ID" value="AAC27078.1"/>
    <property type="molecule type" value="mRNA"/>
</dbReference>
<dbReference type="EMBL" id="AK028428">
    <property type="protein sequence ID" value="BAC25945.1"/>
    <property type="molecule type" value="mRNA"/>
</dbReference>
<dbReference type="EMBL" id="AK036762">
    <property type="protein sequence ID" value="BAC29567.1"/>
    <property type="molecule type" value="mRNA"/>
</dbReference>
<dbReference type="EMBL" id="AK036780">
    <property type="protein sequence ID" value="BAC29574.1"/>
    <property type="molecule type" value="mRNA"/>
</dbReference>
<dbReference type="EMBL" id="AK040604">
    <property type="protein sequence ID" value="BAC30640.1"/>
    <property type="molecule type" value="mRNA"/>
</dbReference>
<dbReference type="EMBL" id="AK054207">
    <property type="protein sequence ID" value="BAC35693.1"/>
    <property type="molecule type" value="mRNA"/>
</dbReference>
<dbReference type="EMBL" id="AK081601">
    <property type="protein sequence ID" value="BAC38267.1"/>
    <property type="molecule type" value="mRNA"/>
</dbReference>
<dbReference type="EMBL" id="BC002003">
    <property type="protein sequence ID" value="AAH02003.1"/>
    <property type="molecule type" value="mRNA"/>
</dbReference>
<dbReference type="CCDS" id="CCDS28087.1"/>
<dbReference type="RefSeq" id="NP_057883.1">
    <property type="nucleotide sequence ID" value="NM_016674.4"/>
</dbReference>
<dbReference type="SMR" id="O88551"/>
<dbReference type="BioGRID" id="198743">
    <property type="interactions" value="2"/>
</dbReference>
<dbReference type="FunCoup" id="O88551">
    <property type="interactions" value="353"/>
</dbReference>
<dbReference type="IntAct" id="O88551">
    <property type="interactions" value="2"/>
</dbReference>
<dbReference type="MINT" id="O88551"/>
<dbReference type="STRING" id="10090.ENSMUSP00000023154"/>
<dbReference type="GlyGen" id="O88551">
    <property type="glycosylation" value="1 site"/>
</dbReference>
<dbReference type="iPTMnet" id="O88551"/>
<dbReference type="PhosphoSitePlus" id="O88551"/>
<dbReference type="SwissPalm" id="O88551"/>
<dbReference type="jPOST" id="O88551"/>
<dbReference type="PaxDb" id="10090-ENSMUSP00000023154"/>
<dbReference type="ProteomicsDB" id="285488"/>
<dbReference type="Antibodypedia" id="3613">
    <property type="antibodies" value="807 antibodies from 44 providers"/>
</dbReference>
<dbReference type="DNASU" id="12737"/>
<dbReference type="Ensembl" id="ENSMUST00000023154.3">
    <property type="protein sequence ID" value="ENSMUSP00000023154.3"/>
    <property type="gene ID" value="ENSMUSG00000022512.4"/>
</dbReference>
<dbReference type="GeneID" id="12737"/>
<dbReference type="KEGG" id="mmu:12737"/>
<dbReference type="UCSC" id="uc007yuz.2">
    <property type="organism name" value="mouse"/>
</dbReference>
<dbReference type="AGR" id="MGI:1276109"/>
<dbReference type="CTD" id="9076"/>
<dbReference type="MGI" id="MGI:1276109">
    <property type="gene designation" value="Cldn1"/>
</dbReference>
<dbReference type="VEuPathDB" id="HostDB:ENSMUSG00000022512"/>
<dbReference type="eggNOG" id="ENOG502R7HF">
    <property type="taxonomic scope" value="Eukaryota"/>
</dbReference>
<dbReference type="GeneTree" id="ENSGT00940000155387"/>
<dbReference type="HOGENOM" id="CLU_076370_2_3_1"/>
<dbReference type="InParanoid" id="O88551"/>
<dbReference type="OMA" id="MPQWKIS"/>
<dbReference type="OrthoDB" id="10025519at2759"/>
<dbReference type="PhylomeDB" id="O88551"/>
<dbReference type="TreeFam" id="TF331936"/>
<dbReference type="BioGRID-ORCS" id="12737">
    <property type="hits" value="0 hits in 78 CRISPR screens"/>
</dbReference>
<dbReference type="ChiTaRS" id="Cldn1">
    <property type="organism name" value="mouse"/>
</dbReference>
<dbReference type="PRO" id="PR:O88551"/>
<dbReference type="Proteomes" id="UP000000589">
    <property type="component" value="Chromosome 16"/>
</dbReference>
<dbReference type="RNAct" id="O88551">
    <property type="molecule type" value="protein"/>
</dbReference>
<dbReference type="Bgee" id="ENSMUSG00000022512">
    <property type="expression patterns" value="Expressed in pigmented layer of retina and 208 other cell types or tissues"/>
</dbReference>
<dbReference type="ExpressionAtlas" id="O88551">
    <property type="expression patterns" value="baseline and differential"/>
</dbReference>
<dbReference type="GO" id="GO:0016324">
    <property type="term" value="C:apical plasma membrane"/>
    <property type="evidence" value="ECO:0000314"/>
    <property type="project" value="MGI"/>
</dbReference>
<dbReference type="GO" id="GO:0016323">
    <property type="term" value="C:basolateral plasma membrane"/>
    <property type="evidence" value="ECO:0007669"/>
    <property type="project" value="UniProtKB-SubCell"/>
</dbReference>
<dbReference type="GO" id="GO:0005923">
    <property type="term" value="C:bicellular tight junction"/>
    <property type="evidence" value="ECO:0000314"/>
    <property type="project" value="UniProtKB"/>
</dbReference>
<dbReference type="GO" id="GO:0030054">
    <property type="term" value="C:cell junction"/>
    <property type="evidence" value="ECO:0000314"/>
    <property type="project" value="CACAO"/>
</dbReference>
<dbReference type="GO" id="GO:0005911">
    <property type="term" value="C:cell-cell junction"/>
    <property type="evidence" value="ECO:0000314"/>
    <property type="project" value="ARUK-UCL"/>
</dbReference>
<dbReference type="GO" id="GO:0016328">
    <property type="term" value="C:lateral plasma membrane"/>
    <property type="evidence" value="ECO:0000314"/>
    <property type="project" value="MGI"/>
</dbReference>
<dbReference type="GO" id="GO:0016020">
    <property type="term" value="C:membrane"/>
    <property type="evidence" value="ECO:0000303"/>
    <property type="project" value="UniProtKB"/>
</dbReference>
<dbReference type="GO" id="GO:0005886">
    <property type="term" value="C:plasma membrane"/>
    <property type="evidence" value="ECO:0000314"/>
    <property type="project" value="UniProtKB"/>
</dbReference>
<dbReference type="GO" id="GO:0032991">
    <property type="term" value="C:protein-containing complex"/>
    <property type="evidence" value="ECO:0007669"/>
    <property type="project" value="Ensembl"/>
</dbReference>
<dbReference type="GO" id="GO:0070160">
    <property type="term" value="C:tight junction"/>
    <property type="evidence" value="ECO:0000314"/>
    <property type="project" value="ARUK-UCL"/>
</dbReference>
<dbReference type="GO" id="GO:0042802">
    <property type="term" value="F:identical protein binding"/>
    <property type="evidence" value="ECO:0000353"/>
    <property type="project" value="UniProtKB"/>
</dbReference>
<dbReference type="GO" id="GO:0005198">
    <property type="term" value="F:structural molecule activity"/>
    <property type="evidence" value="ECO:0007669"/>
    <property type="project" value="InterPro"/>
</dbReference>
<dbReference type="GO" id="GO:0001618">
    <property type="term" value="F:virus receptor activity"/>
    <property type="evidence" value="ECO:0007669"/>
    <property type="project" value="Ensembl"/>
</dbReference>
<dbReference type="GO" id="GO:0070830">
    <property type="term" value="P:bicellular tight junction assembly"/>
    <property type="evidence" value="ECO:0007669"/>
    <property type="project" value="Ensembl"/>
</dbReference>
<dbReference type="GO" id="GO:0016338">
    <property type="term" value="P:calcium-independent cell-cell adhesion via plasma membrane cell-adhesion molecules"/>
    <property type="evidence" value="ECO:0000314"/>
    <property type="project" value="UniProtKB"/>
</dbReference>
<dbReference type="GO" id="GO:0034331">
    <property type="term" value="P:cell junction maintenance"/>
    <property type="evidence" value="ECO:0000315"/>
    <property type="project" value="ARUK-UCL"/>
</dbReference>
<dbReference type="GO" id="GO:0045216">
    <property type="term" value="P:cell-cell junction organization"/>
    <property type="evidence" value="ECO:0000266"/>
    <property type="project" value="MGI"/>
</dbReference>
<dbReference type="GO" id="GO:1903545">
    <property type="term" value="P:cellular response to butyrate"/>
    <property type="evidence" value="ECO:0007669"/>
    <property type="project" value="Ensembl"/>
</dbReference>
<dbReference type="GO" id="GO:0071284">
    <property type="term" value="P:cellular response to lead ion"/>
    <property type="evidence" value="ECO:0007669"/>
    <property type="project" value="Ensembl"/>
</dbReference>
<dbReference type="GO" id="GO:0071560">
    <property type="term" value="P:cellular response to transforming growth factor beta stimulus"/>
    <property type="evidence" value="ECO:0007669"/>
    <property type="project" value="Ensembl"/>
</dbReference>
<dbReference type="GO" id="GO:0071356">
    <property type="term" value="P:cellular response to tumor necrosis factor"/>
    <property type="evidence" value="ECO:0007669"/>
    <property type="project" value="Ensembl"/>
</dbReference>
<dbReference type="GO" id="GO:0071346">
    <property type="term" value="P:cellular response to type II interferon"/>
    <property type="evidence" value="ECO:0007669"/>
    <property type="project" value="Ensembl"/>
</dbReference>
<dbReference type="GO" id="GO:0008065">
    <property type="term" value="P:establishment of blood-nerve barrier"/>
    <property type="evidence" value="ECO:0007669"/>
    <property type="project" value="Ensembl"/>
</dbReference>
<dbReference type="GO" id="GO:0090557">
    <property type="term" value="P:establishment of endothelial intestinal barrier"/>
    <property type="evidence" value="ECO:0007669"/>
    <property type="project" value="Ensembl"/>
</dbReference>
<dbReference type="GO" id="GO:0061436">
    <property type="term" value="P:establishment of skin barrier"/>
    <property type="evidence" value="ECO:0000315"/>
    <property type="project" value="UniProtKB"/>
</dbReference>
<dbReference type="GO" id="GO:0097421">
    <property type="term" value="P:liver regeneration"/>
    <property type="evidence" value="ECO:0007669"/>
    <property type="project" value="Ensembl"/>
</dbReference>
<dbReference type="GO" id="GO:1903348">
    <property type="term" value="P:positive regulation of bicellular tight junction assembly"/>
    <property type="evidence" value="ECO:0007669"/>
    <property type="project" value="Ensembl"/>
</dbReference>
<dbReference type="GO" id="GO:0030335">
    <property type="term" value="P:positive regulation of cell migration"/>
    <property type="evidence" value="ECO:0007669"/>
    <property type="project" value="Ensembl"/>
</dbReference>
<dbReference type="GO" id="GO:0060054">
    <property type="term" value="P:positive regulation of epithelial cell proliferation involved in wound healing"/>
    <property type="evidence" value="ECO:0007669"/>
    <property type="project" value="Ensembl"/>
</dbReference>
<dbReference type="GO" id="GO:0090303">
    <property type="term" value="P:positive regulation of wound healing"/>
    <property type="evidence" value="ECO:0007669"/>
    <property type="project" value="Ensembl"/>
</dbReference>
<dbReference type="GO" id="GO:0051259">
    <property type="term" value="P:protein complex oligomerization"/>
    <property type="evidence" value="ECO:0007669"/>
    <property type="project" value="Ensembl"/>
</dbReference>
<dbReference type="GO" id="GO:0071548">
    <property type="term" value="P:response to dexamethasone"/>
    <property type="evidence" value="ECO:0007669"/>
    <property type="project" value="Ensembl"/>
</dbReference>
<dbReference type="GO" id="GO:0045471">
    <property type="term" value="P:response to ethanol"/>
    <property type="evidence" value="ECO:0007669"/>
    <property type="project" value="Ensembl"/>
</dbReference>
<dbReference type="GO" id="GO:0070673">
    <property type="term" value="P:response to interleukin-18"/>
    <property type="evidence" value="ECO:0007669"/>
    <property type="project" value="Ensembl"/>
</dbReference>
<dbReference type="GO" id="GO:0032496">
    <property type="term" value="P:response to lipopolysaccharide"/>
    <property type="evidence" value="ECO:0007669"/>
    <property type="project" value="Ensembl"/>
</dbReference>
<dbReference type="GO" id="GO:0009636">
    <property type="term" value="P:response to toxic substance"/>
    <property type="evidence" value="ECO:0007669"/>
    <property type="project" value="Ensembl"/>
</dbReference>
<dbReference type="GO" id="GO:0061772">
    <property type="term" value="P:xenobiotic transport across blood-nerve barrier"/>
    <property type="evidence" value="ECO:0007669"/>
    <property type="project" value="Ensembl"/>
</dbReference>
<dbReference type="FunFam" id="1.20.140.150:FF:000001">
    <property type="entry name" value="Claudin"/>
    <property type="match status" value="1"/>
</dbReference>
<dbReference type="Gene3D" id="1.20.140.150">
    <property type="match status" value="1"/>
</dbReference>
<dbReference type="InterPro" id="IPR006187">
    <property type="entry name" value="Claudin"/>
</dbReference>
<dbReference type="InterPro" id="IPR003548">
    <property type="entry name" value="Claudin1"/>
</dbReference>
<dbReference type="InterPro" id="IPR017974">
    <property type="entry name" value="Claudin_CS"/>
</dbReference>
<dbReference type="InterPro" id="IPR004031">
    <property type="entry name" value="PMP22/EMP/MP20/Claudin"/>
</dbReference>
<dbReference type="PANTHER" id="PTHR12002">
    <property type="entry name" value="CLAUDIN"/>
    <property type="match status" value="1"/>
</dbReference>
<dbReference type="Pfam" id="PF00822">
    <property type="entry name" value="PMP22_Claudin"/>
    <property type="match status" value="1"/>
</dbReference>
<dbReference type="PRINTS" id="PR01077">
    <property type="entry name" value="CLAUDIN"/>
</dbReference>
<dbReference type="PRINTS" id="PR01377">
    <property type="entry name" value="CLAUDIN1"/>
</dbReference>
<dbReference type="PROSITE" id="PS01346">
    <property type="entry name" value="CLAUDIN"/>
    <property type="match status" value="1"/>
</dbReference>
<reference key="1">
    <citation type="journal article" date="1998" name="J. Cell Biol.">
        <title>Claudin-1 and -2: novel integral membrane proteins localizing at tight junctions with no sequence similarity to occludin.</title>
        <authorList>
            <person name="Furuse M."/>
            <person name="Fujita K."/>
            <person name="Hiiragi T."/>
            <person name="Fujimoto K."/>
            <person name="Tsukita S."/>
        </authorList>
    </citation>
    <scope>NUCLEOTIDE SEQUENCE [MRNA]</scope>
    <scope>SUBCELLULAR LOCATION</scope>
    <scope>TISSUE SPECIFICITY</scope>
    <source>
        <tissue>Liver</tissue>
    </source>
</reference>
<reference key="2">
    <citation type="journal article" date="2005" name="Science">
        <title>The transcriptional landscape of the mammalian genome.</title>
        <authorList>
            <person name="Carninci P."/>
            <person name="Kasukawa T."/>
            <person name="Katayama S."/>
            <person name="Gough J."/>
            <person name="Frith M.C."/>
            <person name="Maeda N."/>
            <person name="Oyama R."/>
            <person name="Ravasi T."/>
            <person name="Lenhard B."/>
            <person name="Wells C."/>
            <person name="Kodzius R."/>
            <person name="Shimokawa K."/>
            <person name="Bajic V.B."/>
            <person name="Brenner S.E."/>
            <person name="Batalov S."/>
            <person name="Forrest A.R."/>
            <person name="Zavolan M."/>
            <person name="Davis M.J."/>
            <person name="Wilming L.G."/>
            <person name="Aidinis V."/>
            <person name="Allen J.E."/>
            <person name="Ambesi-Impiombato A."/>
            <person name="Apweiler R."/>
            <person name="Aturaliya R.N."/>
            <person name="Bailey T.L."/>
            <person name="Bansal M."/>
            <person name="Baxter L."/>
            <person name="Beisel K.W."/>
            <person name="Bersano T."/>
            <person name="Bono H."/>
            <person name="Chalk A.M."/>
            <person name="Chiu K.P."/>
            <person name="Choudhary V."/>
            <person name="Christoffels A."/>
            <person name="Clutterbuck D.R."/>
            <person name="Crowe M.L."/>
            <person name="Dalla E."/>
            <person name="Dalrymple B.P."/>
            <person name="de Bono B."/>
            <person name="Della Gatta G."/>
            <person name="di Bernardo D."/>
            <person name="Down T."/>
            <person name="Engstrom P."/>
            <person name="Fagiolini M."/>
            <person name="Faulkner G."/>
            <person name="Fletcher C.F."/>
            <person name="Fukushima T."/>
            <person name="Furuno M."/>
            <person name="Futaki S."/>
            <person name="Gariboldi M."/>
            <person name="Georgii-Hemming P."/>
            <person name="Gingeras T.R."/>
            <person name="Gojobori T."/>
            <person name="Green R.E."/>
            <person name="Gustincich S."/>
            <person name="Harbers M."/>
            <person name="Hayashi Y."/>
            <person name="Hensch T.K."/>
            <person name="Hirokawa N."/>
            <person name="Hill D."/>
            <person name="Huminiecki L."/>
            <person name="Iacono M."/>
            <person name="Ikeo K."/>
            <person name="Iwama A."/>
            <person name="Ishikawa T."/>
            <person name="Jakt M."/>
            <person name="Kanapin A."/>
            <person name="Katoh M."/>
            <person name="Kawasawa Y."/>
            <person name="Kelso J."/>
            <person name="Kitamura H."/>
            <person name="Kitano H."/>
            <person name="Kollias G."/>
            <person name="Krishnan S.P."/>
            <person name="Kruger A."/>
            <person name="Kummerfeld S.K."/>
            <person name="Kurochkin I.V."/>
            <person name="Lareau L.F."/>
            <person name="Lazarevic D."/>
            <person name="Lipovich L."/>
            <person name="Liu J."/>
            <person name="Liuni S."/>
            <person name="McWilliam S."/>
            <person name="Madan Babu M."/>
            <person name="Madera M."/>
            <person name="Marchionni L."/>
            <person name="Matsuda H."/>
            <person name="Matsuzawa S."/>
            <person name="Miki H."/>
            <person name="Mignone F."/>
            <person name="Miyake S."/>
            <person name="Morris K."/>
            <person name="Mottagui-Tabar S."/>
            <person name="Mulder N."/>
            <person name="Nakano N."/>
            <person name="Nakauchi H."/>
            <person name="Ng P."/>
            <person name="Nilsson R."/>
            <person name="Nishiguchi S."/>
            <person name="Nishikawa S."/>
            <person name="Nori F."/>
            <person name="Ohara O."/>
            <person name="Okazaki Y."/>
            <person name="Orlando V."/>
            <person name="Pang K.C."/>
            <person name="Pavan W.J."/>
            <person name="Pavesi G."/>
            <person name="Pesole G."/>
            <person name="Petrovsky N."/>
            <person name="Piazza S."/>
            <person name="Reed J."/>
            <person name="Reid J.F."/>
            <person name="Ring B.Z."/>
            <person name="Ringwald M."/>
            <person name="Rost B."/>
            <person name="Ruan Y."/>
            <person name="Salzberg S.L."/>
            <person name="Sandelin A."/>
            <person name="Schneider C."/>
            <person name="Schoenbach C."/>
            <person name="Sekiguchi K."/>
            <person name="Semple C.A."/>
            <person name="Seno S."/>
            <person name="Sessa L."/>
            <person name="Sheng Y."/>
            <person name="Shibata Y."/>
            <person name="Shimada H."/>
            <person name="Shimada K."/>
            <person name="Silva D."/>
            <person name="Sinclair B."/>
            <person name="Sperling S."/>
            <person name="Stupka E."/>
            <person name="Sugiura K."/>
            <person name="Sultana R."/>
            <person name="Takenaka Y."/>
            <person name="Taki K."/>
            <person name="Tammoja K."/>
            <person name="Tan S.L."/>
            <person name="Tang S."/>
            <person name="Taylor M.S."/>
            <person name="Tegner J."/>
            <person name="Teichmann S.A."/>
            <person name="Ueda H.R."/>
            <person name="van Nimwegen E."/>
            <person name="Verardo R."/>
            <person name="Wei C.L."/>
            <person name="Yagi K."/>
            <person name="Yamanishi H."/>
            <person name="Zabarovsky E."/>
            <person name="Zhu S."/>
            <person name="Zimmer A."/>
            <person name="Hide W."/>
            <person name="Bult C."/>
            <person name="Grimmond S.M."/>
            <person name="Teasdale R.D."/>
            <person name="Liu E.T."/>
            <person name="Brusic V."/>
            <person name="Quackenbush J."/>
            <person name="Wahlestedt C."/>
            <person name="Mattick J.S."/>
            <person name="Hume D.A."/>
            <person name="Kai C."/>
            <person name="Sasaki D."/>
            <person name="Tomaru Y."/>
            <person name="Fukuda S."/>
            <person name="Kanamori-Katayama M."/>
            <person name="Suzuki M."/>
            <person name="Aoki J."/>
            <person name="Arakawa T."/>
            <person name="Iida J."/>
            <person name="Imamura K."/>
            <person name="Itoh M."/>
            <person name="Kato T."/>
            <person name="Kawaji H."/>
            <person name="Kawagashira N."/>
            <person name="Kawashima T."/>
            <person name="Kojima M."/>
            <person name="Kondo S."/>
            <person name="Konno H."/>
            <person name="Nakano K."/>
            <person name="Ninomiya N."/>
            <person name="Nishio T."/>
            <person name="Okada M."/>
            <person name="Plessy C."/>
            <person name="Shibata K."/>
            <person name="Shiraki T."/>
            <person name="Suzuki S."/>
            <person name="Tagami M."/>
            <person name="Waki K."/>
            <person name="Watahiki A."/>
            <person name="Okamura-Oho Y."/>
            <person name="Suzuki H."/>
            <person name="Kawai J."/>
            <person name="Hayashizaki Y."/>
        </authorList>
    </citation>
    <scope>NUCLEOTIDE SEQUENCE [LARGE SCALE MRNA]</scope>
    <source>
        <strain>C57BL/6J</strain>
        <tissue>Embryonic head</tissue>
        <tissue>Liver</tissue>
        <tissue>Oviduct</tissue>
        <tissue>Thymus</tissue>
        <tissue>Vagina</tissue>
    </source>
</reference>
<reference key="3">
    <citation type="journal article" date="2004" name="Genome Res.">
        <title>The status, quality, and expansion of the NIH full-length cDNA project: the Mammalian Gene Collection (MGC).</title>
        <authorList>
            <consortium name="The MGC Project Team"/>
        </authorList>
    </citation>
    <scope>NUCLEOTIDE SEQUENCE [LARGE SCALE MRNA]</scope>
    <source>
        <tissue>Mammary tumor</tissue>
    </source>
</reference>
<reference key="4">
    <citation type="journal article" date="1999" name="Curr. Biol.">
        <title>Ca(2+)-independent cell-adhesion activity of claudins, a family of integral membrane proteins localized at tight junctions.</title>
        <authorList>
            <person name="Kubota K."/>
            <person name="Furuse M."/>
            <person name="Sasaki H."/>
            <person name="Sonoda N."/>
            <person name="Fujita K."/>
            <person name="Nagafuchi A."/>
            <person name="Tsukita S."/>
        </authorList>
    </citation>
    <scope>FUNCTION</scope>
    <scope>SUBCELLULAR LOCATION</scope>
    <scope>SUBUNIT</scope>
</reference>
<reference key="5">
    <citation type="journal article" date="1999" name="J. Cell Biol.">
        <title>Manner of interaction of heterogeneous claudin species within and between tight junction strands.</title>
        <authorList>
            <person name="Furuse M."/>
            <person name="Sasaki H."/>
            <person name="Tsukita S."/>
        </authorList>
    </citation>
    <scope>INTERACTION WITH CLDN2 AND CLDN3</scope>
    <scope>SUBCELLULAR LOCATION</scope>
</reference>
<reference key="6">
    <citation type="journal article" date="1999" name="J. Cell Biol.">
        <title>Direct binding of three tight junction-associated MAGUKs, ZO-1, ZO-2, and ZO-3, with the COOH termini of claudins.</title>
        <authorList>
            <person name="Itoh M."/>
            <person name="Furuse M."/>
            <person name="Morita K."/>
            <person name="Kubota K."/>
            <person name="Saitou M."/>
            <person name="Tsukita S."/>
        </authorList>
    </citation>
    <scope>INTERACTION WITH TJP1; TJP2 AND TJP3</scope>
</reference>
<reference key="7">
    <citation type="journal article" date="2001" name="J. Cell Biol.">
        <title>Junctional adhesion molecule (JAM) binds to PAR-3: a possible mechanism for the recruitment of PAR-3 to tight junctions.</title>
        <authorList>
            <person name="Itoh M."/>
            <person name="Sasaki H."/>
            <person name="Furuse M."/>
            <person name="Ozaki H."/>
            <person name="Kita T."/>
            <person name="Tsukita S."/>
        </authorList>
    </citation>
    <scope>INTERACTION WITH MPDZ</scope>
</reference>
<reference key="8">
    <citation type="journal article" date="2002" name="J. Biol. Chem.">
        <title>The carboxyl terminus of zona occludens-3 binds and recruits a mammalian homologue of discs lost to tight junctions.</title>
        <authorList>
            <person name="Roh M.H."/>
            <person name="Liu C.-J."/>
            <person name="Laurinec S."/>
            <person name="Margolis B."/>
        </authorList>
    </citation>
    <scope>INTERACTION WITH PATJ</scope>
</reference>
<reference key="9">
    <citation type="journal article" date="2002" name="J. Cell Biol.">
        <title>Claudin-based tight junctions are crucial for the mammalian epidermal barrier: a lesson from claudin-1-deficient mice.</title>
        <authorList>
            <person name="Furuse M."/>
            <person name="Hata M."/>
            <person name="Furuse K."/>
            <person name="Yoshida Y."/>
            <person name="Haratake A."/>
            <person name="Sugitani Y."/>
            <person name="Noda T."/>
            <person name="Kubo A."/>
            <person name="Tsukita S."/>
        </authorList>
    </citation>
    <scope>FUNCTION</scope>
    <scope>DISRUPTION PHENOTYPE</scope>
    <scope>SUBCELLULAR LOCATION</scope>
    <scope>TISSUE SPECIFICITY</scope>
</reference>
<reference key="10">
    <citation type="journal article" date="2010" name="Cell">
        <title>A tissue-specific atlas of mouse protein phosphorylation and expression.</title>
        <authorList>
            <person name="Huttlin E.L."/>
            <person name="Jedrychowski M.P."/>
            <person name="Elias J.E."/>
            <person name="Goswami T."/>
            <person name="Rad R."/>
            <person name="Beausoleil S.A."/>
            <person name="Villen J."/>
            <person name="Haas W."/>
            <person name="Sowa M.E."/>
            <person name="Gygi S.P."/>
        </authorList>
    </citation>
    <scope>IDENTIFICATION BY MASS SPECTROMETRY [LARGE SCALE ANALYSIS]</scope>
    <source>
        <tissue>Kidney</tissue>
        <tissue>Liver</tissue>
    </source>
</reference>
<reference key="11">
    <citation type="journal article" date="2013" name="J. Invest. Dermatol.">
        <title>Contribution of tight junction proteins to ion, macromolecule, and water barrier in keratinocytes.</title>
        <authorList>
            <person name="Kirschner N."/>
            <person name="Rosenthal R."/>
            <person name="Furuse M."/>
            <person name="Moll I."/>
            <person name="Fromm M."/>
            <person name="Brandner J.M."/>
        </authorList>
    </citation>
    <scope>FUNCTION</scope>
</reference>
<reference key="12">
    <citation type="journal article" date="2019" name="Cell. Mol. Life Sci.">
        <title>Tight junction proteins at the blood-brain barrier: far more than claudin-5.</title>
        <authorList>
            <person name="Berndt P."/>
            <person name="Winkler L."/>
            <person name="Cording J."/>
            <person name="Breitkreuz-Korff O."/>
            <person name="Rex A."/>
            <person name="Dithmer S."/>
            <person name="Rausch V."/>
            <person name="Blasig R."/>
            <person name="Richter M."/>
            <person name="Sporbert A."/>
            <person name="Wolburg H."/>
            <person name="Blasig I.E."/>
            <person name="Haseloff R.F."/>
        </authorList>
    </citation>
    <scope>SUBCELLULAR LOCATION</scope>
</reference>
<protein>
    <recommendedName>
        <fullName>Claudin-1</fullName>
    </recommendedName>
</protein>
<gene>
    <name type="primary">Cldn1</name>
</gene>
<name>CLD1_MOUSE</name>
<feature type="chain" id="PRO_0000144730" description="Claudin-1">
    <location>
        <begin position="1"/>
        <end position="211"/>
    </location>
</feature>
<feature type="topological domain" description="Cytoplasmic" evidence="1">
    <location>
        <begin position="1"/>
        <end position="7"/>
    </location>
</feature>
<feature type="transmembrane region" description="Helical" evidence="3">
    <location>
        <begin position="8"/>
        <end position="28"/>
    </location>
</feature>
<feature type="topological domain" description="Extracellular" evidence="3">
    <location>
        <begin position="29"/>
        <end position="81"/>
    </location>
</feature>
<feature type="transmembrane region" description="Helical" evidence="3">
    <location>
        <begin position="82"/>
        <end position="102"/>
    </location>
</feature>
<feature type="topological domain" description="Cytoplasmic" evidence="3">
    <location>
        <begin position="103"/>
        <end position="115"/>
    </location>
</feature>
<feature type="transmembrane region" description="Helical" evidence="3">
    <location>
        <begin position="116"/>
        <end position="136"/>
    </location>
</feature>
<feature type="topological domain" description="Extracellular" evidence="3">
    <location>
        <begin position="137"/>
        <end position="163"/>
    </location>
</feature>
<feature type="transmembrane region" description="Helical" evidence="3">
    <location>
        <begin position="164"/>
        <end position="184"/>
    </location>
</feature>
<feature type="topological domain" description="Cytoplasmic" evidence="1">
    <location>
        <begin position="185"/>
        <end position="211"/>
    </location>
</feature>
<feature type="region of interest" description="Disordered" evidence="4">
    <location>
        <begin position="190"/>
        <end position="211"/>
    </location>
</feature>
<feature type="region of interest" description="Interactions with TJP1, TJP2, TJP3 and PATJ">
    <location>
        <begin position="210"/>
        <end position="211"/>
    </location>
</feature>
<feature type="disulfide bond" evidence="1">
    <location>
        <begin position="54"/>
        <end position="64"/>
    </location>
</feature>
<comment type="function">
    <text evidence="5 9 11">Claudins function as major constituents of the tight junction complexes that regulate the permeability of epithelia. While some claudin family members play essential roles in the formation of impermeable barriers, others mediate the permeability to ions and small molecules. Often, several claudin family members are coexpressed and interact with each other, and this determines the overall permeability. CLDN1 is required to prevent the paracellular diffusion of small molecules through tight junctions in the epidermis and is required for the normal barrier function of the skin. Required for normal water homeostasis and to prevent excessive water loss through the skin, probably via an indirect effect on the expression levels of other proteins, since CLDN1 itself seems to be dispensable for water barrier formation in keratinocyte tight junctions.</text>
</comment>
<comment type="subunit">
    <text evidence="2 5 6 7 8 10">Can form homo- and heteropolymers with other CLDN. Homopolymers interact with CLDN3, but not CLDN2, homopolymers. Directly interacts with TJP1/ZO-1, TJP2/ZO-2 and TJP3/ZO-3. Interacts with MPDZ and PATJ. Interacts with OCLN, CD81, CLDN4, CLDN6 and CLDN9 (By similarity).</text>
</comment>
<comment type="interaction">
    <interactant intactId="EBI-7158428">
        <id>O88551</id>
    </interactant>
    <interactant intactId="EBI-8026435">
        <id>Q8VBX6</id>
        <label>Mpdz</label>
    </interactant>
    <organismsDiffer>false</organismsDiffer>
    <experiments>2</experiments>
</comment>
<comment type="subcellular location">
    <subcellularLocation>
        <location evidence="5 6 12 13">Cell junction</location>
        <location evidence="5 6 12 13">Tight junction</location>
    </subcellularLocation>
    <subcellularLocation>
        <location evidence="9">Cell membrane</location>
        <topology evidence="3">Multi-pass membrane protein</topology>
    </subcellularLocation>
    <subcellularLocation>
        <location evidence="2">Basolateral cell membrane</location>
    </subcellularLocation>
    <text evidence="2">Associates with CD81 and the CLDN1-CD81 complex localizes to the basolateral cell membrane.</text>
</comment>
<comment type="tissue specificity">
    <text evidence="9 13">Detected in epidermis and liver (at protein level). Widely expressed, with highest levels in liver and kidney.</text>
</comment>
<comment type="disruption phenotype">
    <text evidence="9">Complete perinatal lethality. Mice are born at the expected Mendelian rate, but die within one day after birth, due to severe defects in the skin barrier function, leading to rapid transepidermal water loss and dehydration.</text>
</comment>
<comment type="similarity">
    <text evidence="14">Belongs to the claudin family.</text>
</comment>
<sequence>MANAGLQLLGFILASLGWIGSIVSTALPQWKIYSYAGDNIVTAQAIYEGLWMSCVSQSTGQIQCKVFDSLLNLNSTLQATRALMVIGILLGLIAIFVSTIGMKCMRCLEDDEVQKMWMAVIGGIIFLISGLATLVATAWYGNRIVQEFYDPLTPINARYEFGQALFTGWAAASLCLLGGVLLSCSCPRKTTSYPTPRPYPKPTPSSGKDYV</sequence>
<keyword id="KW-0965">Cell junction</keyword>
<keyword id="KW-1003">Cell membrane</keyword>
<keyword id="KW-1015">Disulfide bond</keyword>
<keyword id="KW-0472">Membrane</keyword>
<keyword id="KW-1185">Reference proteome</keyword>
<keyword id="KW-0796">Tight junction</keyword>
<keyword id="KW-0812">Transmembrane</keyword>
<keyword id="KW-1133">Transmembrane helix</keyword>